<name>RL14_RHOPA</name>
<protein>
    <recommendedName>
        <fullName evidence="2">Large ribosomal subunit protein uL14</fullName>
    </recommendedName>
    <alternativeName>
        <fullName evidence="4">50S ribosomal protein L14</fullName>
    </alternativeName>
    <alternativeName>
        <fullName>RRP-L14</fullName>
    </alternativeName>
</protein>
<keyword id="KW-0687">Ribonucleoprotein</keyword>
<keyword id="KW-0689">Ribosomal protein</keyword>
<keyword id="KW-0694">RNA-binding</keyword>
<keyword id="KW-0699">rRNA-binding</keyword>
<organism>
    <name type="scientific">Rhodopseudomonas palustris (strain ATCC BAA-98 / CGA009)</name>
    <dbReference type="NCBI Taxonomy" id="258594"/>
    <lineage>
        <taxon>Bacteria</taxon>
        <taxon>Pseudomonadati</taxon>
        <taxon>Pseudomonadota</taxon>
        <taxon>Alphaproteobacteria</taxon>
        <taxon>Hyphomicrobiales</taxon>
        <taxon>Nitrobacteraceae</taxon>
        <taxon>Rhodopseudomonas</taxon>
    </lineage>
</organism>
<proteinExistence type="evidence at protein level"/>
<accession>Q6N4U4</accession>
<evidence type="ECO:0000250" key="1"/>
<evidence type="ECO:0000255" key="2">
    <source>
        <dbReference type="HAMAP-Rule" id="MF_01367"/>
    </source>
</evidence>
<evidence type="ECO:0000269" key="3">
    <source>
    </source>
</evidence>
<evidence type="ECO:0000305" key="4"/>
<comment type="function">
    <text evidence="2">Binds to 23S rRNA. Forms part of two intersubunit bridges in the 70S ribosome.</text>
</comment>
<comment type="subunit">
    <text evidence="1">Forms a cluster with proteins L3 and L19. In the 70S ribosome, L14 and L19 interact and together make contacts with the 16S rRNA in bridges B5 and B8 (By similarity). Part of the 50S ribosomal subunit.</text>
</comment>
<comment type="mass spectrometry" mass="13488.6" method="Electrospray" evidence="3"/>
<comment type="similarity">
    <text evidence="2">Belongs to the universal ribosomal protein uL14 family.</text>
</comment>
<feature type="chain" id="PRO_0000224011" description="Large ribosomal subunit protein uL14">
    <location>
        <begin position="1"/>
        <end position="122"/>
    </location>
</feature>
<dbReference type="EMBL" id="BX572603">
    <property type="protein sequence ID" value="CAE28681.1"/>
    <property type="molecule type" value="Genomic_DNA"/>
</dbReference>
<dbReference type="RefSeq" id="WP_011158785.1">
    <property type="nucleotide sequence ID" value="NZ_CP116810.1"/>
</dbReference>
<dbReference type="SMR" id="Q6N4U4"/>
<dbReference type="IntAct" id="Q6N4U4">
    <property type="interactions" value="1"/>
</dbReference>
<dbReference type="STRING" id="258594.RPA3240"/>
<dbReference type="GeneID" id="66894326"/>
<dbReference type="eggNOG" id="COG0093">
    <property type="taxonomic scope" value="Bacteria"/>
</dbReference>
<dbReference type="HOGENOM" id="CLU_095071_2_1_5"/>
<dbReference type="PhylomeDB" id="Q6N4U4"/>
<dbReference type="GO" id="GO:0022625">
    <property type="term" value="C:cytosolic large ribosomal subunit"/>
    <property type="evidence" value="ECO:0007669"/>
    <property type="project" value="TreeGrafter"/>
</dbReference>
<dbReference type="GO" id="GO:0070180">
    <property type="term" value="F:large ribosomal subunit rRNA binding"/>
    <property type="evidence" value="ECO:0007669"/>
    <property type="project" value="TreeGrafter"/>
</dbReference>
<dbReference type="GO" id="GO:0003735">
    <property type="term" value="F:structural constituent of ribosome"/>
    <property type="evidence" value="ECO:0007669"/>
    <property type="project" value="InterPro"/>
</dbReference>
<dbReference type="GO" id="GO:0006412">
    <property type="term" value="P:translation"/>
    <property type="evidence" value="ECO:0007669"/>
    <property type="project" value="UniProtKB-UniRule"/>
</dbReference>
<dbReference type="CDD" id="cd00337">
    <property type="entry name" value="Ribosomal_uL14"/>
    <property type="match status" value="1"/>
</dbReference>
<dbReference type="FunFam" id="2.40.150.20:FF:000001">
    <property type="entry name" value="50S ribosomal protein L14"/>
    <property type="match status" value="1"/>
</dbReference>
<dbReference type="Gene3D" id="2.40.150.20">
    <property type="entry name" value="Ribosomal protein L14"/>
    <property type="match status" value="1"/>
</dbReference>
<dbReference type="HAMAP" id="MF_01367">
    <property type="entry name" value="Ribosomal_uL14"/>
    <property type="match status" value="1"/>
</dbReference>
<dbReference type="InterPro" id="IPR000218">
    <property type="entry name" value="Ribosomal_uL14"/>
</dbReference>
<dbReference type="InterPro" id="IPR005745">
    <property type="entry name" value="Ribosomal_uL14_bac-type"/>
</dbReference>
<dbReference type="InterPro" id="IPR019972">
    <property type="entry name" value="Ribosomal_uL14_CS"/>
</dbReference>
<dbReference type="InterPro" id="IPR036853">
    <property type="entry name" value="Ribosomal_uL14_sf"/>
</dbReference>
<dbReference type="NCBIfam" id="TIGR01067">
    <property type="entry name" value="rplN_bact"/>
    <property type="match status" value="1"/>
</dbReference>
<dbReference type="PANTHER" id="PTHR11761">
    <property type="entry name" value="50S/60S RIBOSOMAL PROTEIN L14/L23"/>
    <property type="match status" value="1"/>
</dbReference>
<dbReference type="PANTHER" id="PTHR11761:SF3">
    <property type="entry name" value="LARGE RIBOSOMAL SUBUNIT PROTEIN UL14M"/>
    <property type="match status" value="1"/>
</dbReference>
<dbReference type="Pfam" id="PF00238">
    <property type="entry name" value="Ribosomal_L14"/>
    <property type="match status" value="1"/>
</dbReference>
<dbReference type="SMART" id="SM01374">
    <property type="entry name" value="Ribosomal_L14"/>
    <property type="match status" value="1"/>
</dbReference>
<dbReference type="SUPFAM" id="SSF50193">
    <property type="entry name" value="Ribosomal protein L14"/>
    <property type="match status" value="1"/>
</dbReference>
<dbReference type="PROSITE" id="PS00049">
    <property type="entry name" value="RIBOSOMAL_L14"/>
    <property type="match status" value="1"/>
</dbReference>
<sequence length="122" mass="13489">MIQMQTNLDVADNSGARRVMCIKVIGGSKRRYATVGDVIVVSIKEAIPRGKVKKGDVMKAVVVRVRKDIRRADGSVIRFDRNAAVLINNQSEPIGTRIFGPVPRELRAKNHMKIISLAPEVL</sequence>
<reference key="1">
    <citation type="journal article" date="2004" name="Nat. Biotechnol.">
        <title>Complete genome sequence of the metabolically versatile photosynthetic bacterium Rhodopseudomonas palustris.</title>
        <authorList>
            <person name="Larimer F.W."/>
            <person name="Chain P."/>
            <person name="Hauser L."/>
            <person name="Lamerdin J.E."/>
            <person name="Malfatti S."/>
            <person name="Do L."/>
            <person name="Land M.L."/>
            <person name="Pelletier D.A."/>
            <person name="Beatty J.T."/>
            <person name="Lang A.S."/>
            <person name="Tabita F.R."/>
            <person name="Gibson J.L."/>
            <person name="Hanson T.E."/>
            <person name="Bobst C."/>
            <person name="Torres y Torres J.L."/>
            <person name="Peres C."/>
            <person name="Harrison F.H."/>
            <person name="Gibson J."/>
            <person name="Harwood C.S."/>
        </authorList>
    </citation>
    <scope>NUCLEOTIDE SEQUENCE [LARGE SCALE GENOMIC DNA]</scope>
    <source>
        <strain>ATCC BAA-98 / CGA009</strain>
    </source>
</reference>
<reference key="2">
    <citation type="journal article" date="2004" name="J. Proteome Res.">
        <title>Characterization of the 70S ribosome from Rhodopseudomonas palustris using an integrated 'top-down' and 'bottom-up' mass spectrometric approach.</title>
        <authorList>
            <person name="Strader M.B."/>
            <person name="VerBerkmoes N.C."/>
            <person name="Tabb D.L."/>
            <person name="Connelly H.M."/>
            <person name="Barton J.W."/>
            <person name="Bruce B.D."/>
            <person name="Pelletier D.A."/>
            <person name="Davison B.H."/>
            <person name="Hettich R.L."/>
            <person name="Larimer F.W."/>
            <person name="Hurst G.B."/>
        </authorList>
    </citation>
    <scope>MASS SPECTROMETRY</scope>
    <source>
        <strain>ATCC BAA-98 / CGA009</strain>
    </source>
</reference>
<gene>
    <name evidence="2" type="primary">rplN</name>
    <name type="ordered locus">RPA3240</name>
</gene>